<gene>
    <name evidence="1" type="primary">ybeY</name>
    <name type="ordered locus">SACE_1484</name>
</gene>
<name>YBEY_SACEN</name>
<comment type="function">
    <text evidence="1">Single strand-specific metallo-endoribonuclease involved in late-stage 70S ribosome quality control and in maturation of the 3' terminus of the 16S rRNA.</text>
</comment>
<comment type="cofactor">
    <cofactor evidence="1">
        <name>Zn(2+)</name>
        <dbReference type="ChEBI" id="CHEBI:29105"/>
    </cofactor>
    <text evidence="1">Binds 1 zinc ion.</text>
</comment>
<comment type="subcellular location">
    <subcellularLocation>
        <location evidence="1">Cytoplasm</location>
    </subcellularLocation>
</comment>
<comment type="similarity">
    <text evidence="1">Belongs to the endoribonuclease YbeY family.</text>
</comment>
<keyword id="KW-0963">Cytoplasm</keyword>
<keyword id="KW-0255">Endonuclease</keyword>
<keyword id="KW-0378">Hydrolase</keyword>
<keyword id="KW-0479">Metal-binding</keyword>
<keyword id="KW-0540">Nuclease</keyword>
<keyword id="KW-1185">Reference proteome</keyword>
<keyword id="KW-0690">Ribosome biogenesis</keyword>
<keyword id="KW-0698">rRNA processing</keyword>
<keyword id="KW-0862">Zinc</keyword>
<feature type="chain" id="PRO_1000000740" description="Endoribonuclease YbeY">
    <location>
        <begin position="1"/>
        <end position="183"/>
    </location>
</feature>
<feature type="region of interest" description="Disordered" evidence="2">
    <location>
        <begin position="156"/>
        <end position="183"/>
    </location>
</feature>
<feature type="binding site" evidence="1">
    <location>
        <position position="118"/>
    </location>
    <ligand>
        <name>Zn(2+)</name>
        <dbReference type="ChEBI" id="CHEBI:29105"/>
        <note>catalytic</note>
    </ligand>
</feature>
<feature type="binding site" evidence="1">
    <location>
        <position position="122"/>
    </location>
    <ligand>
        <name>Zn(2+)</name>
        <dbReference type="ChEBI" id="CHEBI:29105"/>
        <note>catalytic</note>
    </ligand>
</feature>
<feature type="binding site" evidence="1">
    <location>
        <position position="128"/>
    </location>
    <ligand>
        <name>Zn(2+)</name>
        <dbReference type="ChEBI" id="CHEBI:29105"/>
        <note>catalytic</note>
    </ligand>
</feature>
<accession>A4F9T1</accession>
<evidence type="ECO:0000255" key="1">
    <source>
        <dbReference type="HAMAP-Rule" id="MF_00009"/>
    </source>
</evidence>
<evidence type="ECO:0000256" key="2">
    <source>
        <dbReference type="SAM" id="MobiDB-lite"/>
    </source>
</evidence>
<reference key="1">
    <citation type="journal article" date="2007" name="Nat. Biotechnol.">
        <title>Complete genome sequence of the erythromycin-producing bacterium Saccharopolyspora erythraea NRRL23338.</title>
        <authorList>
            <person name="Oliynyk M."/>
            <person name="Samborskyy M."/>
            <person name="Lester J.B."/>
            <person name="Mironenko T."/>
            <person name="Scott N."/>
            <person name="Dickens S."/>
            <person name="Haydock S.F."/>
            <person name="Leadlay P.F."/>
        </authorList>
    </citation>
    <scope>NUCLEOTIDE SEQUENCE [LARGE SCALE GENOMIC DNA]</scope>
    <source>
        <strain>ATCC 11635 / DSM 40517 / JCM 4748 / NBRC 13426 / NCIMB 8594 / NRRL 2338</strain>
    </source>
</reference>
<organism>
    <name type="scientific">Saccharopolyspora erythraea (strain ATCC 11635 / DSM 40517 / JCM 4748 / NBRC 13426 / NCIMB 8594 / NRRL 2338)</name>
    <dbReference type="NCBI Taxonomy" id="405948"/>
    <lineage>
        <taxon>Bacteria</taxon>
        <taxon>Bacillati</taxon>
        <taxon>Actinomycetota</taxon>
        <taxon>Actinomycetes</taxon>
        <taxon>Pseudonocardiales</taxon>
        <taxon>Pseudonocardiaceae</taxon>
        <taxon>Saccharopolyspora</taxon>
    </lineage>
</organism>
<proteinExistence type="inferred from homology"/>
<sequence length="183" mass="19768">MSIEIANESGVEVPEPSIVSVARFALDKMSVSQLAELSIVLVELDVMSDLHERWMDLPGPTDVMAFPMDEYDSSRRPDSAGAGPALLGDIVLCPAFAKDQARKAGHSLLDELHLLTVHGVLHLLGYDHAEPEEEREMFGLQNQILADFRAAKAAAEREQAQRSADSAVLGAVGLEEQDGPGTH</sequence>
<dbReference type="EC" id="3.1.-.-" evidence="1"/>
<dbReference type="EMBL" id="AM420293">
    <property type="protein sequence ID" value="CAM00806.1"/>
    <property type="molecule type" value="Genomic_DNA"/>
</dbReference>
<dbReference type="RefSeq" id="WP_009948048.1">
    <property type="nucleotide sequence ID" value="NC_009142.1"/>
</dbReference>
<dbReference type="SMR" id="A4F9T1"/>
<dbReference type="STRING" id="405948.SACE_1484"/>
<dbReference type="KEGG" id="sen:SACE_1484"/>
<dbReference type="eggNOG" id="COG0319">
    <property type="taxonomic scope" value="Bacteria"/>
</dbReference>
<dbReference type="HOGENOM" id="CLU_106710_3_2_11"/>
<dbReference type="OrthoDB" id="9807740at2"/>
<dbReference type="Proteomes" id="UP000006728">
    <property type="component" value="Chromosome"/>
</dbReference>
<dbReference type="GO" id="GO:0005737">
    <property type="term" value="C:cytoplasm"/>
    <property type="evidence" value="ECO:0007669"/>
    <property type="project" value="UniProtKB-SubCell"/>
</dbReference>
<dbReference type="GO" id="GO:0004222">
    <property type="term" value="F:metalloendopeptidase activity"/>
    <property type="evidence" value="ECO:0007669"/>
    <property type="project" value="InterPro"/>
</dbReference>
<dbReference type="GO" id="GO:0004521">
    <property type="term" value="F:RNA endonuclease activity"/>
    <property type="evidence" value="ECO:0007669"/>
    <property type="project" value="UniProtKB-UniRule"/>
</dbReference>
<dbReference type="GO" id="GO:0008270">
    <property type="term" value="F:zinc ion binding"/>
    <property type="evidence" value="ECO:0007669"/>
    <property type="project" value="UniProtKB-UniRule"/>
</dbReference>
<dbReference type="GO" id="GO:0006364">
    <property type="term" value="P:rRNA processing"/>
    <property type="evidence" value="ECO:0007669"/>
    <property type="project" value="UniProtKB-UniRule"/>
</dbReference>
<dbReference type="Gene3D" id="3.40.390.30">
    <property type="entry name" value="Metalloproteases ('zincins'), catalytic domain"/>
    <property type="match status" value="1"/>
</dbReference>
<dbReference type="HAMAP" id="MF_00009">
    <property type="entry name" value="Endoribonucl_YbeY"/>
    <property type="match status" value="1"/>
</dbReference>
<dbReference type="InterPro" id="IPR023091">
    <property type="entry name" value="MetalPrtase_cat_dom_sf_prd"/>
</dbReference>
<dbReference type="InterPro" id="IPR002036">
    <property type="entry name" value="YbeY"/>
</dbReference>
<dbReference type="InterPro" id="IPR020549">
    <property type="entry name" value="YbeY_CS"/>
</dbReference>
<dbReference type="NCBIfam" id="TIGR00043">
    <property type="entry name" value="rRNA maturation RNase YbeY"/>
    <property type="match status" value="1"/>
</dbReference>
<dbReference type="PANTHER" id="PTHR46986">
    <property type="entry name" value="ENDORIBONUCLEASE YBEY, CHLOROPLASTIC"/>
    <property type="match status" value="1"/>
</dbReference>
<dbReference type="PANTHER" id="PTHR46986:SF1">
    <property type="entry name" value="ENDORIBONUCLEASE YBEY, CHLOROPLASTIC"/>
    <property type="match status" value="1"/>
</dbReference>
<dbReference type="Pfam" id="PF02130">
    <property type="entry name" value="YbeY"/>
    <property type="match status" value="1"/>
</dbReference>
<dbReference type="SUPFAM" id="SSF55486">
    <property type="entry name" value="Metalloproteases ('zincins'), catalytic domain"/>
    <property type="match status" value="1"/>
</dbReference>
<dbReference type="PROSITE" id="PS01306">
    <property type="entry name" value="UPF0054"/>
    <property type="match status" value="1"/>
</dbReference>
<protein>
    <recommendedName>
        <fullName evidence="1">Endoribonuclease YbeY</fullName>
        <ecNumber evidence="1">3.1.-.-</ecNumber>
    </recommendedName>
</protein>